<organism>
    <name type="scientific">Thermodesulfovibrio yellowstonii (strain ATCC 51303 / DSM 11347 / YP87)</name>
    <dbReference type="NCBI Taxonomy" id="289376"/>
    <lineage>
        <taxon>Bacteria</taxon>
        <taxon>Pseudomonadati</taxon>
        <taxon>Nitrospirota</taxon>
        <taxon>Thermodesulfovibrionia</taxon>
        <taxon>Thermodesulfovibrionales</taxon>
        <taxon>Thermodesulfovibrionaceae</taxon>
        <taxon>Thermodesulfovibrio</taxon>
    </lineage>
</organism>
<reference key="1">
    <citation type="submission" date="2008-08" db="EMBL/GenBank/DDBJ databases">
        <title>The complete genome sequence of Thermodesulfovibrio yellowstonii strain ATCC 51303 / DSM 11347 / YP87.</title>
        <authorList>
            <person name="Dodson R.J."/>
            <person name="Durkin A.S."/>
            <person name="Wu M."/>
            <person name="Eisen J."/>
            <person name="Sutton G."/>
        </authorList>
    </citation>
    <scope>NUCLEOTIDE SEQUENCE [LARGE SCALE GENOMIC DNA]</scope>
    <source>
        <strain>ATCC 51303 / DSM 11347 / YP87</strain>
    </source>
</reference>
<comment type="function">
    <text evidence="1">Cell wall formation. Adds enolpyruvyl to UDP-N-acetylglucosamine.</text>
</comment>
<comment type="catalytic activity">
    <reaction evidence="1">
        <text>phosphoenolpyruvate + UDP-N-acetyl-alpha-D-glucosamine = UDP-N-acetyl-3-O-(1-carboxyvinyl)-alpha-D-glucosamine + phosphate</text>
        <dbReference type="Rhea" id="RHEA:18681"/>
        <dbReference type="ChEBI" id="CHEBI:43474"/>
        <dbReference type="ChEBI" id="CHEBI:57705"/>
        <dbReference type="ChEBI" id="CHEBI:58702"/>
        <dbReference type="ChEBI" id="CHEBI:68483"/>
        <dbReference type="EC" id="2.5.1.7"/>
    </reaction>
</comment>
<comment type="pathway">
    <text evidence="1">Cell wall biogenesis; peptidoglycan biosynthesis.</text>
</comment>
<comment type="subcellular location">
    <subcellularLocation>
        <location evidence="1">Cytoplasm</location>
    </subcellularLocation>
</comment>
<comment type="similarity">
    <text evidence="1">Belongs to the EPSP synthase family. MurA subfamily.</text>
</comment>
<evidence type="ECO:0000255" key="1">
    <source>
        <dbReference type="HAMAP-Rule" id="MF_00111"/>
    </source>
</evidence>
<dbReference type="EC" id="2.5.1.7" evidence="1"/>
<dbReference type="EMBL" id="CP001147">
    <property type="protein sequence ID" value="ACI21379.1"/>
    <property type="molecule type" value="Genomic_DNA"/>
</dbReference>
<dbReference type="RefSeq" id="WP_012546097.1">
    <property type="nucleotide sequence ID" value="NC_011296.1"/>
</dbReference>
<dbReference type="RefSeq" id="YP_002248837.1">
    <property type="nucleotide sequence ID" value="NC_011296.1"/>
</dbReference>
<dbReference type="SMR" id="B5YKS2"/>
<dbReference type="FunCoup" id="B5YKS2">
    <property type="interactions" value="401"/>
</dbReference>
<dbReference type="STRING" id="289376.THEYE_A1008"/>
<dbReference type="EnsemblBacteria" id="ACI21379">
    <property type="protein sequence ID" value="ACI21379"/>
    <property type="gene ID" value="THEYE_A1008"/>
</dbReference>
<dbReference type="KEGG" id="tye:THEYE_A1008"/>
<dbReference type="PATRIC" id="fig|289376.4.peg.989"/>
<dbReference type="eggNOG" id="COG0766">
    <property type="taxonomic scope" value="Bacteria"/>
</dbReference>
<dbReference type="HOGENOM" id="CLU_027387_0_0_0"/>
<dbReference type="InParanoid" id="B5YKS2"/>
<dbReference type="OrthoDB" id="9803760at2"/>
<dbReference type="UniPathway" id="UPA00219"/>
<dbReference type="Proteomes" id="UP000000718">
    <property type="component" value="Chromosome"/>
</dbReference>
<dbReference type="GO" id="GO:0005737">
    <property type="term" value="C:cytoplasm"/>
    <property type="evidence" value="ECO:0007669"/>
    <property type="project" value="UniProtKB-SubCell"/>
</dbReference>
<dbReference type="GO" id="GO:0008760">
    <property type="term" value="F:UDP-N-acetylglucosamine 1-carboxyvinyltransferase activity"/>
    <property type="evidence" value="ECO:0007669"/>
    <property type="project" value="UniProtKB-UniRule"/>
</dbReference>
<dbReference type="GO" id="GO:0051301">
    <property type="term" value="P:cell division"/>
    <property type="evidence" value="ECO:0007669"/>
    <property type="project" value="UniProtKB-KW"/>
</dbReference>
<dbReference type="GO" id="GO:0071555">
    <property type="term" value="P:cell wall organization"/>
    <property type="evidence" value="ECO:0007669"/>
    <property type="project" value="UniProtKB-KW"/>
</dbReference>
<dbReference type="GO" id="GO:0009252">
    <property type="term" value="P:peptidoglycan biosynthetic process"/>
    <property type="evidence" value="ECO:0007669"/>
    <property type="project" value="UniProtKB-UniRule"/>
</dbReference>
<dbReference type="GO" id="GO:0008360">
    <property type="term" value="P:regulation of cell shape"/>
    <property type="evidence" value="ECO:0007669"/>
    <property type="project" value="UniProtKB-KW"/>
</dbReference>
<dbReference type="GO" id="GO:0019277">
    <property type="term" value="P:UDP-N-acetylgalactosamine biosynthetic process"/>
    <property type="evidence" value="ECO:0007669"/>
    <property type="project" value="InterPro"/>
</dbReference>
<dbReference type="CDD" id="cd01555">
    <property type="entry name" value="UdpNAET"/>
    <property type="match status" value="1"/>
</dbReference>
<dbReference type="FunFam" id="3.65.10.10:FF:000001">
    <property type="entry name" value="UDP-N-acetylglucosamine 1-carboxyvinyltransferase"/>
    <property type="match status" value="1"/>
</dbReference>
<dbReference type="Gene3D" id="3.65.10.10">
    <property type="entry name" value="Enolpyruvate transferase domain"/>
    <property type="match status" value="2"/>
</dbReference>
<dbReference type="HAMAP" id="MF_00111">
    <property type="entry name" value="MurA"/>
    <property type="match status" value="1"/>
</dbReference>
<dbReference type="InterPro" id="IPR001986">
    <property type="entry name" value="Enolpyruvate_Tfrase_dom"/>
</dbReference>
<dbReference type="InterPro" id="IPR036968">
    <property type="entry name" value="Enolpyruvate_Tfrase_sf"/>
</dbReference>
<dbReference type="InterPro" id="IPR050068">
    <property type="entry name" value="MurA_subfamily"/>
</dbReference>
<dbReference type="InterPro" id="IPR013792">
    <property type="entry name" value="RNA3'P_cycl/enolpyr_Trfase_a/b"/>
</dbReference>
<dbReference type="InterPro" id="IPR005750">
    <property type="entry name" value="UDP_GlcNAc_COvinyl_MurA"/>
</dbReference>
<dbReference type="NCBIfam" id="TIGR01072">
    <property type="entry name" value="murA"/>
    <property type="match status" value="1"/>
</dbReference>
<dbReference type="NCBIfam" id="NF006873">
    <property type="entry name" value="PRK09369.1"/>
    <property type="match status" value="1"/>
</dbReference>
<dbReference type="PANTHER" id="PTHR43783">
    <property type="entry name" value="UDP-N-ACETYLGLUCOSAMINE 1-CARBOXYVINYLTRANSFERASE"/>
    <property type="match status" value="1"/>
</dbReference>
<dbReference type="PANTHER" id="PTHR43783:SF1">
    <property type="entry name" value="UDP-N-ACETYLGLUCOSAMINE 1-CARBOXYVINYLTRANSFERASE"/>
    <property type="match status" value="1"/>
</dbReference>
<dbReference type="Pfam" id="PF00275">
    <property type="entry name" value="EPSP_synthase"/>
    <property type="match status" value="1"/>
</dbReference>
<dbReference type="SUPFAM" id="SSF55205">
    <property type="entry name" value="EPT/RTPC-like"/>
    <property type="match status" value="1"/>
</dbReference>
<keyword id="KW-0131">Cell cycle</keyword>
<keyword id="KW-0132">Cell division</keyword>
<keyword id="KW-0133">Cell shape</keyword>
<keyword id="KW-0961">Cell wall biogenesis/degradation</keyword>
<keyword id="KW-0963">Cytoplasm</keyword>
<keyword id="KW-0573">Peptidoglycan synthesis</keyword>
<keyword id="KW-0670">Pyruvate</keyword>
<keyword id="KW-1185">Reference proteome</keyword>
<keyword id="KW-0808">Transferase</keyword>
<feature type="chain" id="PRO_1000094729" description="UDP-N-acetylglucosamine 1-carboxyvinyltransferase">
    <location>
        <begin position="1"/>
        <end position="416"/>
    </location>
</feature>
<feature type="active site" description="Proton donor" evidence="1">
    <location>
        <position position="115"/>
    </location>
</feature>
<feature type="binding site" evidence="1">
    <location>
        <begin position="22"/>
        <end position="23"/>
    </location>
    <ligand>
        <name>phosphoenolpyruvate</name>
        <dbReference type="ChEBI" id="CHEBI:58702"/>
    </ligand>
</feature>
<feature type="binding site" evidence="1">
    <location>
        <position position="91"/>
    </location>
    <ligand>
        <name>UDP-N-acetyl-alpha-D-glucosamine</name>
        <dbReference type="ChEBI" id="CHEBI:57705"/>
    </ligand>
</feature>
<feature type="binding site" evidence="1">
    <location>
        <position position="304"/>
    </location>
    <ligand>
        <name>UDP-N-acetyl-alpha-D-glucosamine</name>
        <dbReference type="ChEBI" id="CHEBI:57705"/>
    </ligand>
</feature>
<feature type="binding site" evidence="1">
    <location>
        <position position="326"/>
    </location>
    <ligand>
        <name>UDP-N-acetyl-alpha-D-glucosamine</name>
        <dbReference type="ChEBI" id="CHEBI:57705"/>
    </ligand>
</feature>
<feature type="modified residue" description="2-(S-cysteinyl)pyruvic acid O-phosphothioketal" evidence="1">
    <location>
        <position position="115"/>
    </location>
</feature>
<name>MURA_THEYD</name>
<accession>B5YKS2</accession>
<gene>
    <name evidence="1" type="primary">murA</name>
    <name type="ordered locus">THEYE_A1008</name>
</gene>
<proteinExistence type="inferred from homology"/>
<sequence length="416" mass="45238">MDKLLIFGGLPLKGEVTISGAKNAALPIMASTLLAQGVHIFKRIPKLRDVFTMTELIKRMGGIVEFNELCKINTIKINKFEASYDLVKTMRASILVLGPLVARFGRAKVSLPGGCAIGARPVNLHINGLQKMGAKISLQEGYIIAKASRLMGTKIYFDIPTVTGTENLMMAATLAKGTTIIENAAKEPEIVDLANYLILMGAKIEGAGTSIIKVEGVDELKPPQEYEIIPDRIETGTFIAIAGACGGDISLKGCRIDHIDAIILKMKDAGISFKEIENGIRVIGPKRLQAVDIKTMPYPGFPTDMQAQFMAMMTVANGTSVIKETIFENRFMHVAELRRMGADITVEGNTATIRGVKKLKGAPVMATDLRASASLVIAGLIAEEETLIDRIYHLDRGYEELDKKLIQLGARIQRIK</sequence>
<protein>
    <recommendedName>
        <fullName evidence="1">UDP-N-acetylglucosamine 1-carboxyvinyltransferase</fullName>
        <ecNumber evidence="1">2.5.1.7</ecNumber>
    </recommendedName>
    <alternativeName>
        <fullName evidence="1">Enoylpyruvate transferase</fullName>
    </alternativeName>
    <alternativeName>
        <fullName evidence="1">UDP-N-acetylglucosamine enolpyruvyl transferase</fullName>
        <shortName evidence="1">EPT</shortName>
    </alternativeName>
</protein>